<protein>
    <recommendedName>
        <fullName evidence="7">Chemotaxis protein CheY-3</fullName>
    </recommendedName>
    <alternativeName>
        <fullName evidence="6">Chemotaxis response regulator CheY-3</fullName>
    </alternativeName>
</protein>
<gene>
    <name evidence="8" type="ordered locus">VC_2065</name>
</gene>
<proteinExistence type="evidence at protein level"/>
<sequence length="130" mass="14748">MEAILNKNMKILIVDDFSTMRRIVKNLLRDLGFNNTQEADDGLTALPMLKKGDFDFVVTDWNMPGMQGIDLLKNIRADEELKHLPVLMITAEAKREQIIEAAQAGVNGYIVKPFTAATLKEKLDKIFERL</sequence>
<reference evidence="9" key="1">
    <citation type="journal article" date="2000" name="Nature">
        <title>DNA sequence of both chromosomes of the cholera pathogen Vibrio cholerae.</title>
        <authorList>
            <person name="Heidelberg J.F."/>
            <person name="Eisen J.A."/>
            <person name="Nelson W.C."/>
            <person name="Clayton R.A."/>
            <person name="Gwinn M.L."/>
            <person name="Dodson R.J."/>
            <person name="Haft D.H."/>
            <person name="Hickey E.K."/>
            <person name="Peterson J.D."/>
            <person name="Umayam L.A."/>
            <person name="Gill S.R."/>
            <person name="Nelson K.E."/>
            <person name="Read T.D."/>
            <person name="Tettelin H."/>
            <person name="Richardson D.L."/>
            <person name="Ermolaeva M.D."/>
            <person name="Vamathevan J.J."/>
            <person name="Bass S."/>
            <person name="Qin H."/>
            <person name="Dragoi I."/>
            <person name="Sellers P."/>
            <person name="McDonald L.A."/>
            <person name="Utterback T.R."/>
            <person name="Fleischmann R.D."/>
            <person name="Nierman W.C."/>
            <person name="White O."/>
            <person name="Salzberg S.L."/>
            <person name="Smith H.O."/>
            <person name="Colwell R.R."/>
            <person name="Mekalanos J.J."/>
            <person name="Venter J.C."/>
            <person name="Fraser C.M."/>
        </authorList>
    </citation>
    <scope>NUCLEOTIDE SEQUENCE [LARGE SCALE GENOMIC DNA]</scope>
    <source>
        <strain evidence="9">ATCC 39315 / El Tor Inaba N16961</strain>
    </source>
</reference>
<reference evidence="7" key="2">
    <citation type="journal article" date="2001" name="Proc. Natl. Acad. Sci. U.S.A.">
        <title>Selection for in vivo regulators of bacterial virulence.</title>
        <authorList>
            <person name="Lee S.H."/>
            <person name="Butler S.M."/>
            <person name="Camilli A."/>
        </authorList>
    </citation>
    <scope>FUNCTION</scope>
    <scope>DISRUPTION PHENOTYPE</scope>
    <scope>MUTAGENESIS OF ASP-60</scope>
</reference>
<reference evidence="7" key="3">
    <citation type="journal article" date="2004" name="Proc. Natl. Acad. Sci. U.S.A.">
        <title>Both chemotaxis and net motility greatly influence the infectivity of Vibrio cholerae.</title>
        <authorList>
            <person name="Butler S.M."/>
            <person name="Camilli A."/>
        </authorList>
    </citation>
    <scope>FUNCTION</scope>
    <scope>DISRUPTION PHENOTYPE</scope>
    <scope>MUTAGENESIS OF ASP-16; ASP-60 AND TYR-109</scope>
</reference>
<accession>Q9KQD5</accession>
<keyword id="KW-0963">Cytoplasm</keyword>
<keyword id="KW-0283">Flagellar rotation</keyword>
<keyword id="KW-0460">Magnesium</keyword>
<keyword id="KW-0479">Metal-binding</keyword>
<keyword id="KW-0597">Phosphoprotein</keyword>
<keyword id="KW-0614">Plasmid</keyword>
<keyword id="KW-1185">Reference proteome</keyword>
<keyword id="KW-0902">Two-component regulatory system</keyword>
<geneLocation type="plasmid"/>
<name>CHEY_VIBCH</name>
<evidence type="ECO:0000250" key="1">
    <source>
        <dbReference type="UniProtKB" id="A0A0H3AMJ9"/>
    </source>
</evidence>
<evidence type="ECO:0000250" key="2">
    <source>
        <dbReference type="UniProtKB" id="P0AE67"/>
    </source>
</evidence>
<evidence type="ECO:0000255" key="3">
    <source>
        <dbReference type="PROSITE-ProRule" id="PRU00169"/>
    </source>
</evidence>
<evidence type="ECO:0000269" key="4">
    <source>
    </source>
</evidence>
<evidence type="ECO:0000269" key="5">
    <source>
    </source>
</evidence>
<evidence type="ECO:0000303" key="6">
    <source>
    </source>
</evidence>
<evidence type="ECO:0000305" key="7"/>
<evidence type="ECO:0000312" key="8">
    <source>
        <dbReference type="EMBL" id="AAF95211.1"/>
    </source>
</evidence>
<evidence type="ECO:0000312" key="9">
    <source>
        <dbReference type="Proteomes" id="UP000000584"/>
    </source>
</evidence>
<organism evidence="9">
    <name type="scientific">Vibrio cholerae serotype O1 (strain ATCC 39315 / El Tor Inaba N16961)</name>
    <dbReference type="NCBI Taxonomy" id="243277"/>
    <lineage>
        <taxon>Bacteria</taxon>
        <taxon>Pseudomonadati</taxon>
        <taxon>Pseudomonadota</taxon>
        <taxon>Gammaproteobacteria</taxon>
        <taxon>Vibrionales</taxon>
        <taxon>Vibrionaceae</taxon>
        <taxon>Vibrio</taxon>
    </lineage>
</organism>
<dbReference type="EMBL" id="AE003852">
    <property type="protein sequence ID" value="AAF95211.1"/>
    <property type="molecule type" value="Genomic_DNA"/>
</dbReference>
<dbReference type="PIR" id="C82123">
    <property type="entry name" value="C82123"/>
</dbReference>
<dbReference type="RefSeq" id="NP_231697.1">
    <property type="nucleotide sequence ID" value="NC_002505.1"/>
</dbReference>
<dbReference type="SMR" id="Q9KQD5"/>
<dbReference type="STRING" id="243277.VC_2065"/>
<dbReference type="DNASU" id="2613445"/>
<dbReference type="EnsemblBacteria" id="AAF95211">
    <property type="protein sequence ID" value="AAF95211"/>
    <property type="gene ID" value="VC_2065"/>
</dbReference>
<dbReference type="KEGG" id="vch:VC_2065"/>
<dbReference type="PATRIC" id="fig|243277.26.peg.1974"/>
<dbReference type="eggNOG" id="COG0745">
    <property type="taxonomic scope" value="Bacteria"/>
</dbReference>
<dbReference type="HOGENOM" id="CLU_000445_69_12_6"/>
<dbReference type="Proteomes" id="UP000000584">
    <property type="component" value="Chromosome 1"/>
</dbReference>
<dbReference type="GO" id="GO:0005737">
    <property type="term" value="C:cytoplasm"/>
    <property type="evidence" value="ECO:0007669"/>
    <property type="project" value="UniProtKB-SubCell"/>
</dbReference>
<dbReference type="GO" id="GO:0046872">
    <property type="term" value="F:metal ion binding"/>
    <property type="evidence" value="ECO:0007669"/>
    <property type="project" value="UniProtKB-KW"/>
</dbReference>
<dbReference type="GO" id="GO:0097588">
    <property type="term" value="P:archaeal or bacterial-type flagellum-dependent cell motility"/>
    <property type="evidence" value="ECO:0007669"/>
    <property type="project" value="UniProtKB-KW"/>
</dbReference>
<dbReference type="GO" id="GO:0000160">
    <property type="term" value="P:phosphorelay signal transduction system"/>
    <property type="evidence" value="ECO:0007669"/>
    <property type="project" value="UniProtKB-KW"/>
</dbReference>
<dbReference type="CDD" id="cd19923">
    <property type="entry name" value="REC_CheY_CheY3"/>
    <property type="match status" value="1"/>
</dbReference>
<dbReference type="FunFam" id="3.40.50.2300:FF:000019">
    <property type="entry name" value="Chemotaxis response regulator CheY"/>
    <property type="match status" value="1"/>
</dbReference>
<dbReference type="Gene3D" id="3.40.50.2300">
    <property type="match status" value="1"/>
</dbReference>
<dbReference type="InterPro" id="IPR011006">
    <property type="entry name" value="CheY-like_superfamily"/>
</dbReference>
<dbReference type="InterPro" id="IPR001789">
    <property type="entry name" value="Sig_transdc_resp-reg_receiver"/>
</dbReference>
<dbReference type="InterPro" id="IPR052048">
    <property type="entry name" value="ST_Response_Regulator"/>
</dbReference>
<dbReference type="NCBIfam" id="NF007901">
    <property type="entry name" value="PRK10610.1"/>
    <property type="match status" value="1"/>
</dbReference>
<dbReference type="PANTHER" id="PTHR43228">
    <property type="entry name" value="TWO-COMPONENT RESPONSE REGULATOR"/>
    <property type="match status" value="1"/>
</dbReference>
<dbReference type="PANTHER" id="PTHR43228:SF1">
    <property type="entry name" value="TWO-COMPONENT RESPONSE REGULATOR ARR22"/>
    <property type="match status" value="1"/>
</dbReference>
<dbReference type="Pfam" id="PF00072">
    <property type="entry name" value="Response_reg"/>
    <property type="match status" value="1"/>
</dbReference>
<dbReference type="SMART" id="SM00448">
    <property type="entry name" value="REC"/>
    <property type="match status" value="1"/>
</dbReference>
<dbReference type="SUPFAM" id="SSF52172">
    <property type="entry name" value="CheY-like"/>
    <property type="match status" value="1"/>
</dbReference>
<dbReference type="PROSITE" id="PS50110">
    <property type="entry name" value="RESPONSE_REGULATORY"/>
    <property type="match status" value="1"/>
</dbReference>
<comment type="function">
    <text evidence="2 4 5">Acts as a response regulator to control chemotaxis (PubMed:11391007, PubMed:15037750). Involved in the transmission of sensory signals from the chemoreceptors to the flagellar motors (PubMed:11391007, PubMed:15037750). Switches the flagellar rotation by binding to the flagellar motor switch protein FliM (PubMed:15037750). In its active (phosphorylated or acetylated) form, exhibits enhanced binding to a switch component, FliM, at the flagellar motor which induces a change from counterclockwise to clockwise flagellar rotation (By similarity).</text>
</comment>
<comment type="cofactor">
    <cofactor evidence="2">
        <name>Mg(2+)</name>
        <dbReference type="ChEBI" id="CHEBI:18420"/>
    </cofactor>
    <text evidence="2">Binds 1 Mg(2+) ion per subunit.</text>
</comment>
<comment type="subunit">
    <text evidence="1">Interacts with FliM.</text>
</comment>
<comment type="subcellular location">
    <subcellularLocation>
        <location evidence="7">Cytoplasm</location>
    </subcellularLocation>
</comment>
<comment type="disruption phenotype">
    <text evidence="4 5">Defective for chemotaxis, but remains flagellated and motile (PubMed:11391007, PubMed:15037750). Out-competes wild-type strain in mouse small intestine infection assay (PubMed:15037750).</text>
</comment>
<feature type="chain" id="PRO_0000458742" description="Chemotaxis protein CheY-3">
    <location>
        <begin position="1"/>
        <end position="130"/>
    </location>
</feature>
<feature type="domain" description="Response regulatory" evidence="3">
    <location>
        <begin position="10"/>
        <end position="127"/>
    </location>
</feature>
<feature type="binding site" evidence="1">
    <location>
        <position position="15"/>
    </location>
    <ligand>
        <name>Mg(2+)</name>
        <dbReference type="ChEBI" id="CHEBI:18420"/>
    </ligand>
</feature>
<feature type="binding site" evidence="1">
    <location>
        <position position="16"/>
    </location>
    <ligand>
        <name>Mg(2+)</name>
        <dbReference type="ChEBI" id="CHEBI:18420"/>
    </ligand>
</feature>
<feature type="binding site" evidence="1">
    <location>
        <position position="60"/>
    </location>
    <ligand>
        <name>Mg(2+)</name>
        <dbReference type="ChEBI" id="CHEBI:18420"/>
    </ligand>
</feature>
<feature type="binding site" evidence="1">
    <location>
        <position position="62"/>
    </location>
    <ligand>
        <name>Mg(2+)</name>
        <dbReference type="ChEBI" id="CHEBI:18420"/>
    </ligand>
</feature>
<feature type="modified residue" description="4-aspartylphosphate" evidence="3">
    <location>
        <position position="60"/>
    </location>
</feature>
<feature type="mutagenesis site" description="Increase in frequency of flagellar rotation (every 0.2 seconds versus 7.3 seconds in wild-type); when associated with Trp-109. Attenuated infection rate; when associated with Trp-109." evidence="5">
    <original>D</original>
    <variation>K</variation>
    <location>
        <position position="16"/>
    </location>
</feature>
<feature type="mutagenesis site" description="Lack of phosphorylation. Lack of chemotaxis. Increased infectivity; out-competes wild-type strain in mouse small intestine infection assay. Aberrant distribution within the intestine; distributed throughout the stomach and small intestine compared to the mainly distal half of the small intestine distribution of the wild-type strain. Reduced levels of toxT expression. Reduced frequency of flagellar rotation (every 33 seconds versus 7.3 seconds in wild-type). Does not affect host virulence gene expression." evidence="4 5">
    <original>D</original>
    <variation>N</variation>
    <location>
        <position position="60"/>
    </location>
</feature>
<feature type="mutagenesis site" description="Increase in frequency of flagellar rotation (every 0.2 seconds versus 7.3 seconds in wild-type); when associated with Lys-16. Attenuated infection rate; when associated with Lys-16." evidence="5">
    <original>Y</original>
    <variation>W</variation>
    <location>
        <position position="109"/>
    </location>
</feature>